<organism>
    <name type="scientific">Bradyrhizobium diazoefficiens (strain JCM 10833 / BCRC 13528 / IAM 13628 / NBRC 14792 / USDA 110)</name>
    <dbReference type="NCBI Taxonomy" id="224911"/>
    <lineage>
        <taxon>Bacteria</taxon>
        <taxon>Pseudomonadati</taxon>
        <taxon>Pseudomonadota</taxon>
        <taxon>Alphaproteobacteria</taxon>
        <taxon>Hyphomicrobiales</taxon>
        <taxon>Nitrobacteraceae</taxon>
        <taxon>Bradyrhizobium</taxon>
    </lineage>
</organism>
<accession>Q89BP9</accession>
<keyword id="KW-0131">Cell cycle</keyword>
<keyword id="KW-0132">Cell division</keyword>
<keyword id="KW-0342">GTP-binding</keyword>
<keyword id="KW-0460">Magnesium</keyword>
<keyword id="KW-0479">Metal-binding</keyword>
<keyword id="KW-0547">Nucleotide-binding</keyword>
<keyword id="KW-1185">Reference proteome</keyword>
<keyword id="KW-0717">Septation</keyword>
<gene>
    <name evidence="1" type="primary">engB</name>
    <name type="ordered locus">blr8099</name>
</gene>
<proteinExistence type="inferred from homology"/>
<comment type="function">
    <text evidence="1">Necessary for normal cell division and for the maintenance of normal septation.</text>
</comment>
<comment type="cofactor">
    <cofactor evidence="1">
        <name>Mg(2+)</name>
        <dbReference type="ChEBI" id="CHEBI:18420"/>
    </cofactor>
</comment>
<comment type="similarity">
    <text evidence="1">Belongs to the TRAFAC class TrmE-Era-EngA-EngB-Septin-like GTPase superfamily. EngB GTPase family.</text>
</comment>
<name>ENGB_BRADU</name>
<sequence>MTDDKDAKLIEAGRKLFARDWQFIWASPSIQTLPPMDGVEIAFAGRSNVGKSSLINALTGRNALARTSHTPGRTQELIFFEVPGKKDLRLVDMPGYGYAKAPKSQVASWTELIHKFLLGRASLARVYVLIDARHGLKDVDLEILGTLDRSAVSYQIVLTKADQVKPSELASRIAETEAALAKHPAAFPNVLATSSRSATGMAELRAAMAKLLEERSS</sequence>
<reference key="1">
    <citation type="journal article" date="2002" name="DNA Res.">
        <title>Complete genomic sequence of nitrogen-fixing symbiotic bacterium Bradyrhizobium japonicum USDA110.</title>
        <authorList>
            <person name="Kaneko T."/>
            <person name="Nakamura Y."/>
            <person name="Sato S."/>
            <person name="Minamisawa K."/>
            <person name="Uchiumi T."/>
            <person name="Sasamoto S."/>
            <person name="Watanabe A."/>
            <person name="Idesawa K."/>
            <person name="Iriguchi M."/>
            <person name="Kawashima K."/>
            <person name="Kohara M."/>
            <person name="Matsumoto M."/>
            <person name="Shimpo S."/>
            <person name="Tsuruoka H."/>
            <person name="Wada T."/>
            <person name="Yamada M."/>
            <person name="Tabata S."/>
        </authorList>
    </citation>
    <scope>NUCLEOTIDE SEQUENCE [LARGE SCALE GENOMIC DNA]</scope>
    <source>
        <strain>JCM 10833 / BCRC 13528 / IAM 13628 / NBRC 14792 / USDA 110</strain>
    </source>
</reference>
<dbReference type="EMBL" id="BA000040">
    <property type="protein sequence ID" value="BAC53364.1"/>
    <property type="molecule type" value="Genomic_DNA"/>
</dbReference>
<dbReference type="RefSeq" id="NP_774739.1">
    <property type="nucleotide sequence ID" value="NC_004463.1"/>
</dbReference>
<dbReference type="RefSeq" id="WP_011090821.1">
    <property type="nucleotide sequence ID" value="NC_004463.1"/>
</dbReference>
<dbReference type="SMR" id="Q89BP9"/>
<dbReference type="FunCoup" id="Q89BP9">
    <property type="interactions" value="473"/>
</dbReference>
<dbReference type="STRING" id="224911.AAV28_38190"/>
<dbReference type="EnsemblBacteria" id="BAC53364">
    <property type="protein sequence ID" value="BAC53364"/>
    <property type="gene ID" value="BAC53364"/>
</dbReference>
<dbReference type="GeneID" id="46495010"/>
<dbReference type="KEGG" id="bja:blr8099"/>
<dbReference type="PATRIC" id="fig|224911.44.peg.8269"/>
<dbReference type="eggNOG" id="COG0218">
    <property type="taxonomic scope" value="Bacteria"/>
</dbReference>
<dbReference type="HOGENOM" id="CLU_033732_2_0_5"/>
<dbReference type="InParanoid" id="Q89BP9"/>
<dbReference type="OrthoDB" id="9804921at2"/>
<dbReference type="PhylomeDB" id="Q89BP9"/>
<dbReference type="Proteomes" id="UP000002526">
    <property type="component" value="Chromosome"/>
</dbReference>
<dbReference type="GO" id="GO:0005829">
    <property type="term" value="C:cytosol"/>
    <property type="evidence" value="ECO:0000318"/>
    <property type="project" value="GO_Central"/>
</dbReference>
<dbReference type="GO" id="GO:0005525">
    <property type="term" value="F:GTP binding"/>
    <property type="evidence" value="ECO:0007669"/>
    <property type="project" value="UniProtKB-UniRule"/>
</dbReference>
<dbReference type="GO" id="GO:0046872">
    <property type="term" value="F:metal ion binding"/>
    <property type="evidence" value="ECO:0007669"/>
    <property type="project" value="UniProtKB-KW"/>
</dbReference>
<dbReference type="GO" id="GO:0000917">
    <property type="term" value="P:division septum assembly"/>
    <property type="evidence" value="ECO:0007669"/>
    <property type="project" value="UniProtKB-KW"/>
</dbReference>
<dbReference type="CDD" id="cd01876">
    <property type="entry name" value="YihA_EngB"/>
    <property type="match status" value="1"/>
</dbReference>
<dbReference type="FunFam" id="3.40.50.300:FF:000098">
    <property type="entry name" value="Probable GTP-binding protein EngB"/>
    <property type="match status" value="1"/>
</dbReference>
<dbReference type="Gene3D" id="3.40.50.300">
    <property type="entry name" value="P-loop containing nucleotide triphosphate hydrolases"/>
    <property type="match status" value="1"/>
</dbReference>
<dbReference type="HAMAP" id="MF_00321">
    <property type="entry name" value="GTPase_EngB"/>
    <property type="match status" value="1"/>
</dbReference>
<dbReference type="InterPro" id="IPR030393">
    <property type="entry name" value="G_ENGB_dom"/>
</dbReference>
<dbReference type="InterPro" id="IPR006073">
    <property type="entry name" value="GTP-bd"/>
</dbReference>
<dbReference type="InterPro" id="IPR019987">
    <property type="entry name" value="GTP-bd_ribosome_bio_YsxC"/>
</dbReference>
<dbReference type="InterPro" id="IPR027417">
    <property type="entry name" value="P-loop_NTPase"/>
</dbReference>
<dbReference type="NCBIfam" id="TIGR03598">
    <property type="entry name" value="GTPase_YsxC"/>
    <property type="match status" value="1"/>
</dbReference>
<dbReference type="PANTHER" id="PTHR11649:SF13">
    <property type="entry name" value="ENGB-TYPE G DOMAIN-CONTAINING PROTEIN"/>
    <property type="match status" value="1"/>
</dbReference>
<dbReference type="PANTHER" id="PTHR11649">
    <property type="entry name" value="MSS1/TRME-RELATED GTP-BINDING PROTEIN"/>
    <property type="match status" value="1"/>
</dbReference>
<dbReference type="Pfam" id="PF01926">
    <property type="entry name" value="MMR_HSR1"/>
    <property type="match status" value="1"/>
</dbReference>
<dbReference type="SUPFAM" id="SSF52540">
    <property type="entry name" value="P-loop containing nucleoside triphosphate hydrolases"/>
    <property type="match status" value="1"/>
</dbReference>
<dbReference type="PROSITE" id="PS51706">
    <property type="entry name" value="G_ENGB"/>
    <property type="match status" value="1"/>
</dbReference>
<feature type="chain" id="PRO_0000266829" description="Probable GTP-binding protein EngB">
    <location>
        <begin position="1"/>
        <end position="217"/>
    </location>
</feature>
<feature type="domain" description="EngB-type G" evidence="1">
    <location>
        <begin position="37"/>
        <end position="214"/>
    </location>
</feature>
<feature type="binding site" evidence="1">
    <location>
        <begin position="45"/>
        <end position="52"/>
    </location>
    <ligand>
        <name>GTP</name>
        <dbReference type="ChEBI" id="CHEBI:37565"/>
    </ligand>
</feature>
<feature type="binding site" evidence="1">
    <location>
        <position position="52"/>
    </location>
    <ligand>
        <name>Mg(2+)</name>
        <dbReference type="ChEBI" id="CHEBI:18420"/>
    </ligand>
</feature>
<feature type="binding site" evidence="1">
    <location>
        <begin position="72"/>
        <end position="76"/>
    </location>
    <ligand>
        <name>GTP</name>
        <dbReference type="ChEBI" id="CHEBI:37565"/>
    </ligand>
</feature>
<feature type="binding site" evidence="1">
    <location>
        <position position="74"/>
    </location>
    <ligand>
        <name>Mg(2+)</name>
        <dbReference type="ChEBI" id="CHEBI:18420"/>
    </ligand>
</feature>
<feature type="binding site" evidence="1">
    <location>
        <begin position="92"/>
        <end position="95"/>
    </location>
    <ligand>
        <name>GTP</name>
        <dbReference type="ChEBI" id="CHEBI:37565"/>
    </ligand>
</feature>
<feature type="binding site" evidence="1">
    <location>
        <begin position="159"/>
        <end position="162"/>
    </location>
    <ligand>
        <name>GTP</name>
        <dbReference type="ChEBI" id="CHEBI:37565"/>
    </ligand>
</feature>
<feature type="binding site" evidence="1">
    <location>
        <begin position="193"/>
        <end position="195"/>
    </location>
    <ligand>
        <name>GTP</name>
        <dbReference type="ChEBI" id="CHEBI:37565"/>
    </ligand>
</feature>
<evidence type="ECO:0000255" key="1">
    <source>
        <dbReference type="HAMAP-Rule" id="MF_00321"/>
    </source>
</evidence>
<protein>
    <recommendedName>
        <fullName evidence="1">Probable GTP-binding protein EngB</fullName>
    </recommendedName>
</protein>